<accession>Q5KZ63</accession>
<organism>
    <name type="scientific">Geobacillus kaustophilus (strain HTA426)</name>
    <dbReference type="NCBI Taxonomy" id="235909"/>
    <lineage>
        <taxon>Bacteria</taxon>
        <taxon>Bacillati</taxon>
        <taxon>Bacillota</taxon>
        <taxon>Bacilli</taxon>
        <taxon>Bacillales</taxon>
        <taxon>Anoxybacillaceae</taxon>
        <taxon>Geobacillus</taxon>
        <taxon>Geobacillus thermoleovorans group</taxon>
    </lineage>
</organism>
<reference key="1">
    <citation type="journal article" date="2004" name="Nucleic Acids Res.">
        <title>Thermoadaptation trait revealed by the genome sequence of thermophilic Geobacillus kaustophilus.</title>
        <authorList>
            <person name="Takami H."/>
            <person name="Takaki Y."/>
            <person name="Chee G.-J."/>
            <person name="Nishi S."/>
            <person name="Shimamura S."/>
            <person name="Suzuki H."/>
            <person name="Matsui S."/>
            <person name="Uchiyama I."/>
        </authorList>
    </citation>
    <scope>NUCLEOTIDE SEQUENCE [LARGE SCALE GENOMIC DNA]</scope>
    <source>
        <strain>HTA426</strain>
    </source>
</reference>
<name>NSRR_GEOKA</name>
<feature type="chain" id="PRO_0000271134" description="HTH-type transcriptional regulator NsrR">
    <location>
        <begin position="1"/>
        <end position="147"/>
    </location>
</feature>
<feature type="domain" description="HTH rrf2-type" evidence="2">
    <location>
        <begin position="2"/>
        <end position="133"/>
    </location>
</feature>
<feature type="DNA-binding region" description="H-T-H motif" evidence="2">
    <location>
        <begin position="28"/>
        <end position="51"/>
    </location>
</feature>
<feature type="binding site" evidence="2">
    <location>
        <position position="92"/>
    </location>
    <ligand>
        <name>[2Fe-2S] cluster</name>
        <dbReference type="ChEBI" id="CHEBI:190135"/>
    </ligand>
</feature>
<feature type="binding site" evidence="2">
    <location>
        <position position="100"/>
    </location>
    <ligand>
        <name>[2Fe-2S] cluster</name>
        <dbReference type="ChEBI" id="CHEBI:190135"/>
    </ligand>
</feature>
<feature type="binding site" evidence="2">
    <location>
        <position position="106"/>
    </location>
    <ligand>
        <name>[2Fe-2S] cluster</name>
        <dbReference type="ChEBI" id="CHEBI:190135"/>
    </ligand>
</feature>
<keyword id="KW-0001">2Fe-2S</keyword>
<keyword id="KW-0238">DNA-binding</keyword>
<keyword id="KW-0408">Iron</keyword>
<keyword id="KW-0411">Iron-sulfur</keyword>
<keyword id="KW-0479">Metal-binding</keyword>
<keyword id="KW-1185">Reference proteome</keyword>
<keyword id="KW-0804">Transcription</keyword>
<keyword id="KW-0805">Transcription regulation</keyword>
<dbReference type="EMBL" id="BA000043">
    <property type="protein sequence ID" value="BAD76023.1"/>
    <property type="molecule type" value="Genomic_DNA"/>
</dbReference>
<dbReference type="RefSeq" id="WP_011231230.1">
    <property type="nucleotide sequence ID" value="NC_006510.1"/>
</dbReference>
<dbReference type="SMR" id="Q5KZ63"/>
<dbReference type="STRING" id="235909.GK1738"/>
<dbReference type="GeneID" id="32063609"/>
<dbReference type="KEGG" id="gka:GK1738"/>
<dbReference type="eggNOG" id="COG1959">
    <property type="taxonomic scope" value="Bacteria"/>
</dbReference>
<dbReference type="HOGENOM" id="CLU_107144_2_1_9"/>
<dbReference type="Proteomes" id="UP000001172">
    <property type="component" value="Chromosome"/>
</dbReference>
<dbReference type="GO" id="GO:0005829">
    <property type="term" value="C:cytosol"/>
    <property type="evidence" value="ECO:0007669"/>
    <property type="project" value="TreeGrafter"/>
</dbReference>
<dbReference type="GO" id="GO:0051537">
    <property type="term" value="F:2 iron, 2 sulfur cluster binding"/>
    <property type="evidence" value="ECO:0007669"/>
    <property type="project" value="UniProtKB-KW"/>
</dbReference>
<dbReference type="GO" id="GO:0003677">
    <property type="term" value="F:DNA binding"/>
    <property type="evidence" value="ECO:0007669"/>
    <property type="project" value="UniProtKB-KW"/>
</dbReference>
<dbReference type="GO" id="GO:0003700">
    <property type="term" value="F:DNA-binding transcription factor activity"/>
    <property type="evidence" value="ECO:0007669"/>
    <property type="project" value="TreeGrafter"/>
</dbReference>
<dbReference type="GO" id="GO:0046872">
    <property type="term" value="F:metal ion binding"/>
    <property type="evidence" value="ECO:0007669"/>
    <property type="project" value="UniProtKB-KW"/>
</dbReference>
<dbReference type="Gene3D" id="1.10.10.10">
    <property type="entry name" value="Winged helix-like DNA-binding domain superfamily/Winged helix DNA-binding domain"/>
    <property type="match status" value="1"/>
</dbReference>
<dbReference type="InterPro" id="IPR030489">
    <property type="entry name" value="TR_Rrf2-type_CS"/>
</dbReference>
<dbReference type="InterPro" id="IPR000944">
    <property type="entry name" value="Tscrpt_reg_Rrf2"/>
</dbReference>
<dbReference type="InterPro" id="IPR036388">
    <property type="entry name" value="WH-like_DNA-bd_sf"/>
</dbReference>
<dbReference type="InterPro" id="IPR036390">
    <property type="entry name" value="WH_DNA-bd_sf"/>
</dbReference>
<dbReference type="NCBIfam" id="TIGR00738">
    <property type="entry name" value="rrf2_super"/>
    <property type="match status" value="1"/>
</dbReference>
<dbReference type="PANTHER" id="PTHR33221:SF4">
    <property type="entry name" value="HTH-TYPE TRANSCRIPTIONAL REPRESSOR NSRR"/>
    <property type="match status" value="1"/>
</dbReference>
<dbReference type="PANTHER" id="PTHR33221">
    <property type="entry name" value="WINGED HELIX-TURN-HELIX TRANSCRIPTIONAL REGULATOR, RRF2 FAMILY"/>
    <property type="match status" value="1"/>
</dbReference>
<dbReference type="Pfam" id="PF02082">
    <property type="entry name" value="Rrf2"/>
    <property type="match status" value="1"/>
</dbReference>
<dbReference type="SUPFAM" id="SSF46785">
    <property type="entry name" value="Winged helix' DNA-binding domain"/>
    <property type="match status" value="1"/>
</dbReference>
<dbReference type="PROSITE" id="PS01332">
    <property type="entry name" value="HTH_RRF2_1"/>
    <property type="match status" value="1"/>
</dbReference>
<dbReference type="PROSITE" id="PS51197">
    <property type="entry name" value="HTH_RRF2_2"/>
    <property type="match status" value="1"/>
</dbReference>
<comment type="function">
    <text evidence="1">Nitric oxide-responsive transcriptional regulator.</text>
</comment>
<comment type="cofactor">
    <cofactor evidence="3">
        <name>[2Fe-2S] cluster</name>
        <dbReference type="ChEBI" id="CHEBI:190135"/>
    </cofactor>
    <text evidence="3">Binds 1 [2Fe-2S] cluster per subunit.</text>
</comment>
<proteinExistence type="inferred from homology"/>
<protein>
    <recommendedName>
        <fullName>HTH-type transcriptional regulator NsrR</fullName>
    </recommendedName>
</protein>
<sequence length="147" mass="16529">MQLTNYTEYALRVLLFLGALDEEEKTNIKDIAAAFSISEHHLSKIVYELGKLGYIETIRGRNGGIRLAKRPAEIVIGAVVRETEENLSLVECFAAHGNECVLTPVCRLRFALHEALEAFLRVLDAYTLADLLEDRASLRSLLKERRG</sequence>
<gene>
    <name type="primary">nsrR</name>
    <name type="ordered locus">GK1738</name>
</gene>
<evidence type="ECO:0000250" key="1"/>
<evidence type="ECO:0000255" key="2">
    <source>
        <dbReference type="PROSITE-ProRule" id="PRU00540"/>
    </source>
</evidence>
<evidence type="ECO:0000305" key="3"/>